<accession>Q8N319</accession>
<accession>E9PB59</accession>
<accession>Q8N575</accession>
<comment type="alternative products">
    <event type="alternative splicing"/>
    <isoform>
        <id>Q8N319-3</id>
        <name>1</name>
        <sequence type="displayed"/>
    </isoform>
    <isoform>
        <id>Q8N319-4</id>
        <name>2</name>
        <sequence type="described" ref="VSP_047241"/>
    </isoform>
</comment>
<comment type="sequence caution" evidence="2">
    <conflict type="miscellaneous discrepancy">
        <sequence resource="EMBL-CDS" id="AAH32706"/>
    </conflict>
    <text>Intron retention.</text>
</comment>
<sequence>MMPLAEAGALAQGGGPSATEWACILRRKTPRHKQPTLLMVRASRRSGKTSAVLKAGRQSVSGRKNSTSKDLVTLGASSLREERGHPLHPRHRKAVHLRTRGRTRGWVQTLARMSRRTRGPVERAAAAAAAAAGGDAGHAPFPPPPAADGARAPRSPGQVTPRGLRLRLPRRESLLRGLCRPLRPLLGFRESDSAKPASLRLLQHTPSARRNYRIAGARLMRSNYPPPLSSAALRGAGPTRRN</sequence>
<proteinExistence type="evidence at protein level"/>
<dbReference type="EMBL" id="AL109615">
    <property type="status" value="NOT_ANNOTATED_CDS"/>
    <property type="molecule type" value="Genomic_DNA"/>
</dbReference>
<dbReference type="EMBL" id="CH471081">
    <property type="protein sequence ID" value="EAX04238.1"/>
    <property type="molecule type" value="Genomic_DNA"/>
</dbReference>
<dbReference type="EMBL" id="BC029071">
    <property type="protein sequence ID" value="AAH29071.2"/>
    <property type="molecule type" value="mRNA"/>
</dbReference>
<dbReference type="EMBL" id="BC032706">
    <property type="protein sequence ID" value="AAH32706.1"/>
    <property type="status" value="ALT_SEQ"/>
    <property type="molecule type" value="mRNA"/>
</dbReference>
<dbReference type="RefSeq" id="NP_001165463.1">
    <property type="nucleotide sequence ID" value="NM_001171992.2"/>
</dbReference>
<dbReference type="RefSeq" id="NP_001311298.1">
    <property type="nucleotide sequence ID" value="NM_001324369.1"/>
</dbReference>
<dbReference type="RefSeq" id="NP_694978.2">
    <property type="nucleotide sequence ID" value="NM_153246.5"/>
</dbReference>
<dbReference type="BioGRID" id="128722">
    <property type="interactions" value="2"/>
</dbReference>
<dbReference type="STRING" id="9606.ENSP00000426159"/>
<dbReference type="GlyGen" id="Q8N319">
    <property type="glycosylation" value="2 sites, 1 O-linked glycan (2 sites)"/>
</dbReference>
<dbReference type="iPTMnet" id="Q8N319"/>
<dbReference type="PhosphoSitePlus" id="Q8N319"/>
<dbReference type="BioMuta" id="C6orf223"/>
<dbReference type="DMDM" id="74728754"/>
<dbReference type="MassIVE" id="Q8N319"/>
<dbReference type="PaxDb" id="9606-ENSP00000426159"/>
<dbReference type="PeptideAtlas" id="Q8N319"/>
<dbReference type="ProteomicsDB" id="19151"/>
<dbReference type="ProteomicsDB" id="71754">
    <molecule id="Q8N319-3"/>
</dbReference>
<dbReference type="DNASU" id="221416"/>
<dbReference type="Ensembl" id="ENST00000336600.7">
    <molecule id="Q8N319-3"/>
    <property type="protein sequence ID" value="ENSP00000520764.1"/>
    <property type="gene ID" value="ENSG00000181577.16"/>
</dbReference>
<dbReference type="Ensembl" id="ENST00000439969.3">
    <molecule id="Q8N319-4"/>
    <property type="protein sequence ID" value="ENSP00000520765.1"/>
    <property type="gene ID" value="ENSG00000181577.16"/>
</dbReference>
<dbReference type="UCSC" id="uc003own.4">
    <molecule id="Q8N319-3"/>
    <property type="organism name" value="human"/>
</dbReference>
<dbReference type="AGR" id="HGNC:28692"/>
<dbReference type="GeneCards" id="LINC03040"/>
<dbReference type="HGNC" id="HGNC:28692">
    <property type="gene designation" value="LINC03040"/>
</dbReference>
<dbReference type="neXtProt" id="NX_Q8N319"/>
<dbReference type="OpenTargets" id="ENSG00000181577"/>
<dbReference type="PharmGKB" id="PA162380428"/>
<dbReference type="eggNOG" id="ENOG502TD4J">
    <property type="taxonomic scope" value="Eukaryota"/>
</dbReference>
<dbReference type="GeneTree" id="ENSGT00390000005085"/>
<dbReference type="HOGENOM" id="CLU_1165520_0_0_1"/>
<dbReference type="InParanoid" id="Q8N319"/>
<dbReference type="PAN-GO" id="Q8N319">
    <property type="GO annotations" value="0 GO annotations based on evolutionary models"/>
</dbReference>
<dbReference type="PhylomeDB" id="Q8N319"/>
<dbReference type="TreeFam" id="TF341894"/>
<dbReference type="PathwayCommons" id="Q8N319"/>
<dbReference type="BioGRID-ORCS" id="221416">
    <property type="hits" value="31 hits in 1113 CRISPR screens"/>
</dbReference>
<dbReference type="GenomeRNAi" id="221416"/>
<dbReference type="Pharos" id="Q8N319">
    <property type="development level" value="Tdark"/>
</dbReference>
<dbReference type="PRO" id="PR:Q8N319"/>
<dbReference type="Proteomes" id="UP000005640">
    <property type="component" value="Chromosome 6"/>
</dbReference>
<dbReference type="RNAct" id="Q8N319">
    <property type="molecule type" value="protein"/>
</dbReference>
<dbReference type="InterPro" id="IPR041009">
    <property type="entry name" value="DUF5550"/>
</dbReference>
<dbReference type="Pfam" id="PF17704">
    <property type="entry name" value="DUF5550"/>
    <property type="match status" value="1"/>
</dbReference>
<organism>
    <name type="scientific">Homo sapiens</name>
    <name type="common">Human</name>
    <dbReference type="NCBI Taxonomy" id="9606"/>
    <lineage>
        <taxon>Eukaryota</taxon>
        <taxon>Metazoa</taxon>
        <taxon>Chordata</taxon>
        <taxon>Craniata</taxon>
        <taxon>Vertebrata</taxon>
        <taxon>Euteleostomi</taxon>
        <taxon>Mammalia</taxon>
        <taxon>Eutheria</taxon>
        <taxon>Euarchontoglires</taxon>
        <taxon>Primates</taxon>
        <taxon>Haplorrhini</taxon>
        <taxon>Catarrhini</taxon>
        <taxon>Hominidae</taxon>
        <taxon>Homo</taxon>
    </lineage>
</organism>
<gene>
    <name evidence="3" type="primary">LINC03040</name>
    <name type="synonym">C6orf223</name>
</gene>
<evidence type="ECO:0000256" key="1">
    <source>
        <dbReference type="SAM" id="MobiDB-lite"/>
    </source>
</evidence>
<evidence type="ECO:0000305" key="2"/>
<evidence type="ECO:0000312" key="3">
    <source>
        <dbReference type="HGNC" id="HGNC:28692"/>
    </source>
</evidence>
<protein>
    <recommendedName>
        <fullName>Uncharacterized protein LINC03040</fullName>
    </recommendedName>
</protein>
<name>CF223_HUMAN</name>
<reference key="1">
    <citation type="journal article" date="2003" name="Nature">
        <title>The DNA sequence and analysis of human chromosome 6.</title>
        <authorList>
            <person name="Mungall A.J."/>
            <person name="Palmer S.A."/>
            <person name="Sims S.K."/>
            <person name="Edwards C.A."/>
            <person name="Ashurst J.L."/>
            <person name="Wilming L."/>
            <person name="Jones M.C."/>
            <person name="Horton R."/>
            <person name="Hunt S.E."/>
            <person name="Scott C.E."/>
            <person name="Gilbert J.G.R."/>
            <person name="Clamp M.E."/>
            <person name="Bethel G."/>
            <person name="Milne S."/>
            <person name="Ainscough R."/>
            <person name="Almeida J.P."/>
            <person name="Ambrose K.D."/>
            <person name="Andrews T.D."/>
            <person name="Ashwell R.I.S."/>
            <person name="Babbage A.K."/>
            <person name="Bagguley C.L."/>
            <person name="Bailey J."/>
            <person name="Banerjee R."/>
            <person name="Barker D.J."/>
            <person name="Barlow K.F."/>
            <person name="Bates K."/>
            <person name="Beare D.M."/>
            <person name="Beasley H."/>
            <person name="Beasley O."/>
            <person name="Bird C.P."/>
            <person name="Blakey S.E."/>
            <person name="Bray-Allen S."/>
            <person name="Brook J."/>
            <person name="Brown A.J."/>
            <person name="Brown J.Y."/>
            <person name="Burford D.C."/>
            <person name="Burrill W."/>
            <person name="Burton J."/>
            <person name="Carder C."/>
            <person name="Carter N.P."/>
            <person name="Chapman J.C."/>
            <person name="Clark S.Y."/>
            <person name="Clark G."/>
            <person name="Clee C.M."/>
            <person name="Clegg S."/>
            <person name="Cobley V."/>
            <person name="Collier R.E."/>
            <person name="Collins J.E."/>
            <person name="Colman L.K."/>
            <person name="Corby N.R."/>
            <person name="Coville G.J."/>
            <person name="Culley K.M."/>
            <person name="Dhami P."/>
            <person name="Davies J."/>
            <person name="Dunn M."/>
            <person name="Earthrowl M.E."/>
            <person name="Ellington A.E."/>
            <person name="Evans K.A."/>
            <person name="Faulkner L."/>
            <person name="Francis M.D."/>
            <person name="Frankish A."/>
            <person name="Frankland J."/>
            <person name="French L."/>
            <person name="Garner P."/>
            <person name="Garnett J."/>
            <person name="Ghori M.J."/>
            <person name="Gilby L.M."/>
            <person name="Gillson C.J."/>
            <person name="Glithero R.J."/>
            <person name="Grafham D.V."/>
            <person name="Grant M."/>
            <person name="Gribble S."/>
            <person name="Griffiths C."/>
            <person name="Griffiths M.N.D."/>
            <person name="Hall R."/>
            <person name="Halls K.S."/>
            <person name="Hammond S."/>
            <person name="Harley J.L."/>
            <person name="Hart E.A."/>
            <person name="Heath P.D."/>
            <person name="Heathcott R."/>
            <person name="Holmes S.J."/>
            <person name="Howden P.J."/>
            <person name="Howe K.L."/>
            <person name="Howell G.R."/>
            <person name="Huckle E."/>
            <person name="Humphray S.J."/>
            <person name="Humphries M.D."/>
            <person name="Hunt A.R."/>
            <person name="Johnson C.M."/>
            <person name="Joy A.A."/>
            <person name="Kay M."/>
            <person name="Keenan S.J."/>
            <person name="Kimberley A.M."/>
            <person name="King A."/>
            <person name="Laird G.K."/>
            <person name="Langford C."/>
            <person name="Lawlor S."/>
            <person name="Leongamornlert D.A."/>
            <person name="Leversha M."/>
            <person name="Lloyd C.R."/>
            <person name="Lloyd D.M."/>
            <person name="Loveland J.E."/>
            <person name="Lovell J."/>
            <person name="Martin S."/>
            <person name="Mashreghi-Mohammadi M."/>
            <person name="Maslen G.L."/>
            <person name="Matthews L."/>
            <person name="McCann O.T."/>
            <person name="McLaren S.J."/>
            <person name="McLay K."/>
            <person name="McMurray A."/>
            <person name="Moore M.J.F."/>
            <person name="Mullikin J.C."/>
            <person name="Niblett D."/>
            <person name="Nickerson T."/>
            <person name="Novik K.L."/>
            <person name="Oliver K."/>
            <person name="Overton-Larty E.K."/>
            <person name="Parker A."/>
            <person name="Patel R."/>
            <person name="Pearce A.V."/>
            <person name="Peck A.I."/>
            <person name="Phillimore B.J.C.T."/>
            <person name="Phillips S."/>
            <person name="Plumb R.W."/>
            <person name="Porter K.M."/>
            <person name="Ramsey Y."/>
            <person name="Ranby S.A."/>
            <person name="Rice C.M."/>
            <person name="Ross M.T."/>
            <person name="Searle S.M."/>
            <person name="Sehra H.K."/>
            <person name="Sheridan E."/>
            <person name="Skuce C.D."/>
            <person name="Smith S."/>
            <person name="Smith M."/>
            <person name="Spraggon L."/>
            <person name="Squares S.L."/>
            <person name="Steward C.A."/>
            <person name="Sycamore N."/>
            <person name="Tamlyn-Hall G."/>
            <person name="Tester J."/>
            <person name="Theaker A.J."/>
            <person name="Thomas D.W."/>
            <person name="Thorpe A."/>
            <person name="Tracey A."/>
            <person name="Tromans A."/>
            <person name="Tubby B."/>
            <person name="Wall M."/>
            <person name="Wallis J.M."/>
            <person name="West A.P."/>
            <person name="White S.S."/>
            <person name="Whitehead S.L."/>
            <person name="Whittaker H."/>
            <person name="Wild A."/>
            <person name="Willey D.J."/>
            <person name="Wilmer T.E."/>
            <person name="Wood J.M."/>
            <person name="Wray P.W."/>
            <person name="Wyatt J.C."/>
            <person name="Young L."/>
            <person name="Younger R.M."/>
            <person name="Bentley D.R."/>
            <person name="Coulson A."/>
            <person name="Durbin R.M."/>
            <person name="Hubbard T."/>
            <person name="Sulston J.E."/>
            <person name="Dunham I."/>
            <person name="Rogers J."/>
            <person name="Beck S."/>
        </authorList>
    </citation>
    <scope>NUCLEOTIDE SEQUENCE [LARGE SCALE GENOMIC DNA]</scope>
</reference>
<reference key="2">
    <citation type="submission" date="2005-07" db="EMBL/GenBank/DDBJ databases">
        <authorList>
            <person name="Mural R.J."/>
            <person name="Istrail S."/>
            <person name="Sutton G.G."/>
            <person name="Florea L."/>
            <person name="Halpern A.L."/>
            <person name="Mobarry C.M."/>
            <person name="Lippert R."/>
            <person name="Walenz B."/>
            <person name="Shatkay H."/>
            <person name="Dew I."/>
            <person name="Miller J.R."/>
            <person name="Flanigan M.J."/>
            <person name="Edwards N.J."/>
            <person name="Bolanos R."/>
            <person name="Fasulo D."/>
            <person name="Halldorsson B.V."/>
            <person name="Hannenhalli S."/>
            <person name="Turner R."/>
            <person name="Yooseph S."/>
            <person name="Lu F."/>
            <person name="Nusskern D.R."/>
            <person name="Shue B.C."/>
            <person name="Zheng X.H."/>
            <person name="Zhong F."/>
            <person name="Delcher A.L."/>
            <person name="Huson D.H."/>
            <person name="Kravitz S.A."/>
            <person name="Mouchard L."/>
            <person name="Reinert K."/>
            <person name="Remington K.A."/>
            <person name="Clark A.G."/>
            <person name="Waterman M.S."/>
            <person name="Eichler E.E."/>
            <person name="Adams M.D."/>
            <person name="Hunkapiller M.W."/>
            <person name="Myers E.W."/>
            <person name="Venter J.C."/>
        </authorList>
    </citation>
    <scope>NUCLEOTIDE SEQUENCE [LARGE SCALE GENOMIC DNA]</scope>
</reference>
<reference key="3">
    <citation type="journal article" date="2004" name="Genome Res.">
        <title>The status, quality, and expansion of the NIH full-length cDNA project: the Mammalian Gene Collection (MGC).</title>
        <authorList>
            <consortium name="The MGC Project Team"/>
        </authorList>
    </citation>
    <scope>NUCLEOTIDE SEQUENCE [LARGE SCALE MRNA] (ISOFORM 1)</scope>
    <source>
        <tissue>Lymph</tissue>
    </source>
</reference>
<feature type="chain" id="PRO_0000317189" description="Uncharacterized protein LINC03040">
    <location>
        <begin position="1"/>
        <end position="242"/>
    </location>
</feature>
<feature type="region of interest" description="Disordered" evidence="1">
    <location>
        <begin position="43"/>
        <end position="70"/>
    </location>
</feature>
<feature type="region of interest" description="Disordered" evidence="1">
    <location>
        <begin position="112"/>
        <end position="162"/>
    </location>
</feature>
<feature type="compositionally biased region" description="Polar residues" evidence="1">
    <location>
        <begin position="58"/>
        <end position="70"/>
    </location>
</feature>
<feature type="compositionally biased region" description="Low complexity" evidence="1">
    <location>
        <begin position="122"/>
        <end position="139"/>
    </location>
</feature>
<feature type="compositionally biased region" description="Low complexity" evidence="1">
    <location>
        <begin position="147"/>
        <end position="162"/>
    </location>
</feature>
<feature type="splice variant" id="VSP_047241" description="In isoform 2." evidence="2">
    <original>KTPRHKQPTLLMVRASRRSGKTSAVLKAGRQSVSGRKNSTSKDLVTLGASSLREERGHPLHPRHRKAVHLRTRGRTRGWVQTLARMSRRTRGPVERAAAAAAAAAGGDAGHAPFPPPPAADGARAPRSPGQVTPRGLRLRLPRRESLLRGLCRPLRPLLGFRESDSAKPASLRLLQHTPSARRNYRIAGARLMRSNYPPPLSSAALRGAGPTRRN</original>
    <variation>LLRKEGVDGGLFSPEDPQAQAAHLTDGQSIQKKWQDFSCPQSRKTECFWQKEQHKQRSGNPRCLQFEGGERTPPPPQT</variation>
    <location>
        <begin position="28"/>
        <end position="242"/>
    </location>
</feature>
<feature type="sequence variant" id="VAR_050816" description="In dbSNP:rs2295333.">
    <original>K</original>
    <variation>E</variation>
    <location>
        <position position="48"/>
    </location>
</feature>
<feature type="sequence variant" id="VAR_061592" description="In dbSNP:rs60336135.">
    <original>V</original>
    <variation>M</variation>
    <location>
        <position position="107"/>
    </location>
</feature>
<feature type="sequence conflict" description="In Ref. 3; AAH32706." evidence="2" ref="3">
    <original>A</original>
    <variation>AA</variation>
    <location>
        <position position="132"/>
    </location>
</feature>
<keyword id="KW-0025">Alternative splicing</keyword>
<keyword id="KW-1267">Proteomics identification</keyword>
<keyword id="KW-1185">Reference proteome</keyword>